<evidence type="ECO:0000255" key="1">
    <source>
        <dbReference type="HAMAP-Rule" id="MF_00135"/>
    </source>
</evidence>
<gene>
    <name evidence="1" type="primary">trpF</name>
    <name type="ordered locus">Cj0347</name>
</gene>
<proteinExistence type="inferred from homology"/>
<feature type="chain" id="PRO_0000154350" description="N-(5'-phosphoribosyl)anthranilate isomerase">
    <location>
        <begin position="1"/>
        <end position="199"/>
    </location>
</feature>
<name>TRPF_CAMJE</name>
<keyword id="KW-0028">Amino-acid biosynthesis</keyword>
<keyword id="KW-0057">Aromatic amino acid biosynthesis</keyword>
<keyword id="KW-0413">Isomerase</keyword>
<keyword id="KW-1185">Reference proteome</keyword>
<keyword id="KW-0822">Tryptophan biosynthesis</keyword>
<protein>
    <recommendedName>
        <fullName evidence="1">N-(5'-phosphoribosyl)anthranilate isomerase</fullName>
        <shortName evidence="1">PRAI</shortName>
        <ecNumber evidence="1">5.3.1.24</ecNumber>
    </recommendedName>
</protein>
<reference key="1">
    <citation type="journal article" date="2000" name="Nature">
        <title>The genome sequence of the food-borne pathogen Campylobacter jejuni reveals hypervariable sequences.</title>
        <authorList>
            <person name="Parkhill J."/>
            <person name="Wren B.W."/>
            <person name="Mungall K.L."/>
            <person name="Ketley J.M."/>
            <person name="Churcher C.M."/>
            <person name="Basham D."/>
            <person name="Chillingworth T."/>
            <person name="Davies R.M."/>
            <person name="Feltwell T."/>
            <person name="Holroyd S."/>
            <person name="Jagels K."/>
            <person name="Karlyshev A.V."/>
            <person name="Moule S."/>
            <person name="Pallen M.J."/>
            <person name="Penn C.W."/>
            <person name="Quail M.A."/>
            <person name="Rajandream M.A."/>
            <person name="Rutherford K.M."/>
            <person name="van Vliet A.H.M."/>
            <person name="Whitehead S."/>
            <person name="Barrell B.G."/>
        </authorList>
    </citation>
    <scope>NUCLEOTIDE SEQUENCE [LARGE SCALE GENOMIC DNA]</scope>
    <source>
        <strain>ATCC 700819 / NCTC 11168</strain>
    </source>
</reference>
<dbReference type="EC" id="5.3.1.24" evidence="1"/>
<dbReference type="EMBL" id="AL111168">
    <property type="protein sequence ID" value="CAL34498.1"/>
    <property type="molecule type" value="Genomic_DNA"/>
</dbReference>
<dbReference type="PIR" id="B81377">
    <property type="entry name" value="B81377"/>
</dbReference>
<dbReference type="RefSeq" id="WP_002858740.1">
    <property type="nucleotide sequence ID" value="NZ_SZUC01000004.1"/>
</dbReference>
<dbReference type="RefSeq" id="YP_002343785.1">
    <property type="nucleotide sequence ID" value="NC_002163.1"/>
</dbReference>
<dbReference type="SMR" id="Q9PIF3"/>
<dbReference type="IntAct" id="Q9PIF3">
    <property type="interactions" value="13"/>
</dbReference>
<dbReference type="STRING" id="192222.Cj0347"/>
<dbReference type="PaxDb" id="192222-Cj0347"/>
<dbReference type="EnsemblBacteria" id="CAL34498">
    <property type="protein sequence ID" value="CAL34498"/>
    <property type="gene ID" value="Cj0347"/>
</dbReference>
<dbReference type="GeneID" id="904671"/>
<dbReference type="KEGG" id="cje:Cj0347"/>
<dbReference type="PATRIC" id="fig|192222.6.peg.339"/>
<dbReference type="eggNOG" id="COG0135">
    <property type="taxonomic scope" value="Bacteria"/>
</dbReference>
<dbReference type="HOGENOM" id="CLU_076364_2_0_7"/>
<dbReference type="OrthoDB" id="9796196at2"/>
<dbReference type="UniPathway" id="UPA00035">
    <property type="reaction ID" value="UER00042"/>
</dbReference>
<dbReference type="Proteomes" id="UP000000799">
    <property type="component" value="Chromosome"/>
</dbReference>
<dbReference type="GO" id="GO:0004640">
    <property type="term" value="F:phosphoribosylanthranilate isomerase activity"/>
    <property type="evidence" value="ECO:0007669"/>
    <property type="project" value="UniProtKB-UniRule"/>
</dbReference>
<dbReference type="GO" id="GO:0000162">
    <property type="term" value="P:L-tryptophan biosynthetic process"/>
    <property type="evidence" value="ECO:0007669"/>
    <property type="project" value="UniProtKB-UniRule"/>
</dbReference>
<dbReference type="CDD" id="cd00405">
    <property type="entry name" value="PRAI"/>
    <property type="match status" value="1"/>
</dbReference>
<dbReference type="Gene3D" id="3.20.20.70">
    <property type="entry name" value="Aldolase class I"/>
    <property type="match status" value="1"/>
</dbReference>
<dbReference type="HAMAP" id="MF_00135">
    <property type="entry name" value="PRAI"/>
    <property type="match status" value="1"/>
</dbReference>
<dbReference type="InterPro" id="IPR013785">
    <property type="entry name" value="Aldolase_TIM"/>
</dbReference>
<dbReference type="InterPro" id="IPR001240">
    <property type="entry name" value="PRAI_dom"/>
</dbReference>
<dbReference type="InterPro" id="IPR011060">
    <property type="entry name" value="RibuloseP-bd_barrel"/>
</dbReference>
<dbReference type="InterPro" id="IPR044643">
    <property type="entry name" value="TrpF_fam"/>
</dbReference>
<dbReference type="PANTHER" id="PTHR42894">
    <property type="entry name" value="N-(5'-PHOSPHORIBOSYL)ANTHRANILATE ISOMERASE"/>
    <property type="match status" value="1"/>
</dbReference>
<dbReference type="PANTHER" id="PTHR42894:SF1">
    <property type="entry name" value="N-(5'-PHOSPHORIBOSYL)ANTHRANILATE ISOMERASE"/>
    <property type="match status" value="1"/>
</dbReference>
<dbReference type="Pfam" id="PF00697">
    <property type="entry name" value="PRAI"/>
    <property type="match status" value="1"/>
</dbReference>
<dbReference type="SUPFAM" id="SSF51366">
    <property type="entry name" value="Ribulose-phoshate binding barrel"/>
    <property type="match status" value="1"/>
</dbReference>
<accession>Q9PIF3</accession>
<accession>Q0PBG2</accession>
<comment type="catalytic activity">
    <reaction evidence="1">
        <text>N-(5-phospho-beta-D-ribosyl)anthranilate = 1-(2-carboxyphenylamino)-1-deoxy-D-ribulose 5-phosphate</text>
        <dbReference type="Rhea" id="RHEA:21540"/>
        <dbReference type="ChEBI" id="CHEBI:18277"/>
        <dbReference type="ChEBI" id="CHEBI:58613"/>
        <dbReference type="EC" id="5.3.1.24"/>
    </reaction>
</comment>
<comment type="pathway">
    <text evidence="1">Amino-acid biosynthesis; L-tryptophan biosynthesis; L-tryptophan from chorismate: step 3/5.</text>
</comment>
<comment type="similarity">
    <text evidence="1">Belongs to the TrpF family.</text>
</comment>
<sequence>MLKLKICGIKDEKNAKDLAFLNIDFFGLIFAKSPRRVSLEQARNLSAIFHEKDKKVVGVFVDENLEQILRCIKEAKLDGIQIYRTITKEEFEILKVQNVFVWQVISVENSLDLKSEIFANLVLFDAKGILKGGNGISFDWTLLGSYTKDFILAGGIGLDNVHKAVKTGAKILDLNSKLEDEKGLKDINKIKQILKELKK</sequence>
<organism>
    <name type="scientific">Campylobacter jejuni subsp. jejuni serotype O:2 (strain ATCC 700819 / NCTC 11168)</name>
    <dbReference type="NCBI Taxonomy" id="192222"/>
    <lineage>
        <taxon>Bacteria</taxon>
        <taxon>Pseudomonadati</taxon>
        <taxon>Campylobacterota</taxon>
        <taxon>Epsilonproteobacteria</taxon>
        <taxon>Campylobacterales</taxon>
        <taxon>Campylobacteraceae</taxon>
        <taxon>Campylobacter</taxon>
    </lineage>
</organism>